<comment type="similarity">
    <text evidence="3">Belongs to the ABC transporter superfamily.</text>
</comment>
<proteinExistence type="inferred from homology"/>
<organism>
    <name type="scientific">Dictyostelium discoideum</name>
    <name type="common">Social amoeba</name>
    <dbReference type="NCBI Taxonomy" id="44689"/>
    <lineage>
        <taxon>Eukaryota</taxon>
        <taxon>Amoebozoa</taxon>
        <taxon>Evosea</taxon>
        <taxon>Eumycetozoa</taxon>
        <taxon>Dictyostelia</taxon>
        <taxon>Dictyosteliales</taxon>
        <taxon>Dictyosteliaceae</taxon>
        <taxon>Dictyostelium</taxon>
    </lineage>
</organism>
<gene>
    <name type="primary">abcF4</name>
    <name type="ORF">DDB_G0267436</name>
</gene>
<reference key="1">
    <citation type="journal article" date="2002" name="Eukaryot. Cell">
        <title>Evolutionary analyses of ABC transporters of Dictyostelium discoideum.</title>
        <authorList>
            <person name="Anjard C."/>
            <person name="Loomis W.F."/>
        </authorList>
    </citation>
    <scope>NUCLEOTIDE SEQUENCE [GENOMIC DNA]</scope>
    <scope>NOMENCLATURE</scope>
    <source>
        <strain>AX4</strain>
    </source>
</reference>
<reference key="2">
    <citation type="journal article" date="2005" name="Nature">
        <title>The genome of the social amoeba Dictyostelium discoideum.</title>
        <authorList>
            <person name="Eichinger L."/>
            <person name="Pachebat J.A."/>
            <person name="Gloeckner G."/>
            <person name="Rajandream M.A."/>
            <person name="Sucgang R."/>
            <person name="Berriman M."/>
            <person name="Song J."/>
            <person name="Olsen R."/>
            <person name="Szafranski K."/>
            <person name="Xu Q."/>
            <person name="Tunggal B."/>
            <person name="Kummerfeld S."/>
            <person name="Madera M."/>
            <person name="Konfortov B.A."/>
            <person name="Rivero F."/>
            <person name="Bankier A.T."/>
            <person name="Lehmann R."/>
            <person name="Hamlin N."/>
            <person name="Davies R."/>
            <person name="Gaudet P."/>
            <person name="Fey P."/>
            <person name="Pilcher K."/>
            <person name="Chen G."/>
            <person name="Saunders D."/>
            <person name="Sodergren E.J."/>
            <person name="Davis P."/>
            <person name="Kerhornou A."/>
            <person name="Nie X."/>
            <person name="Hall N."/>
            <person name="Anjard C."/>
            <person name="Hemphill L."/>
            <person name="Bason N."/>
            <person name="Farbrother P."/>
            <person name="Desany B."/>
            <person name="Just E."/>
            <person name="Morio T."/>
            <person name="Rost R."/>
            <person name="Churcher C.M."/>
            <person name="Cooper J."/>
            <person name="Haydock S."/>
            <person name="van Driessche N."/>
            <person name="Cronin A."/>
            <person name="Goodhead I."/>
            <person name="Muzny D.M."/>
            <person name="Mourier T."/>
            <person name="Pain A."/>
            <person name="Lu M."/>
            <person name="Harper D."/>
            <person name="Lindsay R."/>
            <person name="Hauser H."/>
            <person name="James K.D."/>
            <person name="Quiles M."/>
            <person name="Madan Babu M."/>
            <person name="Saito T."/>
            <person name="Buchrieser C."/>
            <person name="Wardroper A."/>
            <person name="Felder M."/>
            <person name="Thangavelu M."/>
            <person name="Johnson D."/>
            <person name="Knights A."/>
            <person name="Loulseged H."/>
            <person name="Mungall K.L."/>
            <person name="Oliver K."/>
            <person name="Price C."/>
            <person name="Quail M.A."/>
            <person name="Urushihara H."/>
            <person name="Hernandez J."/>
            <person name="Rabbinowitsch E."/>
            <person name="Steffen D."/>
            <person name="Sanders M."/>
            <person name="Ma J."/>
            <person name="Kohara Y."/>
            <person name="Sharp S."/>
            <person name="Simmonds M.N."/>
            <person name="Spiegler S."/>
            <person name="Tivey A."/>
            <person name="Sugano S."/>
            <person name="White B."/>
            <person name="Walker D."/>
            <person name="Woodward J.R."/>
            <person name="Winckler T."/>
            <person name="Tanaka Y."/>
            <person name="Shaulsky G."/>
            <person name="Schleicher M."/>
            <person name="Weinstock G.M."/>
            <person name="Rosenthal A."/>
            <person name="Cox E.C."/>
            <person name="Chisholm R.L."/>
            <person name="Gibbs R.A."/>
            <person name="Loomis W.F."/>
            <person name="Platzer M."/>
            <person name="Kay R.R."/>
            <person name="Williams J.G."/>
            <person name="Dear P.H."/>
            <person name="Noegel A.A."/>
            <person name="Barrell B.G."/>
            <person name="Kuspa A."/>
        </authorList>
    </citation>
    <scope>NUCLEOTIDE SEQUENCE [LARGE SCALE GENOMIC DNA]</scope>
    <source>
        <strain>AX4</strain>
    </source>
</reference>
<feature type="chain" id="PRO_0000346859" description="ABC transporter F family member 4">
    <location>
        <begin position="1"/>
        <end position="1142"/>
    </location>
</feature>
<feature type="domain" description="ABC transporter 1" evidence="1">
    <location>
        <begin position="604"/>
        <end position="857"/>
    </location>
</feature>
<feature type="domain" description="ABC transporter 2" evidence="1">
    <location>
        <begin position="923"/>
        <end position="1139"/>
    </location>
</feature>
<feature type="region of interest" description="Disordered" evidence="2">
    <location>
        <begin position="1"/>
        <end position="564"/>
    </location>
</feature>
<feature type="compositionally biased region" description="Low complexity" evidence="2">
    <location>
        <begin position="121"/>
        <end position="143"/>
    </location>
</feature>
<feature type="compositionally biased region" description="Low complexity" evidence="2">
    <location>
        <begin position="153"/>
        <end position="166"/>
    </location>
</feature>
<feature type="compositionally biased region" description="Low complexity" evidence="2">
    <location>
        <begin position="182"/>
        <end position="195"/>
    </location>
</feature>
<feature type="compositionally biased region" description="Acidic residues" evidence="2">
    <location>
        <begin position="203"/>
        <end position="212"/>
    </location>
</feature>
<feature type="compositionally biased region" description="Acidic residues" evidence="2">
    <location>
        <begin position="233"/>
        <end position="244"/>
    </location>
</feature>
<feature type="compositionally biased region" description="Basic residues" evidence="2">
    <location>
        <begin position="249"/>
        <end position="261"/>
    </location>
</feature>
<feature type="compositionally biased region" description="Basic residues" evidence="2">
    <location>
        <begin position="280"/>
        <end position="290"/>
    </location>
</feature>
<feature type="compositionally biased region" description="Acidic residues" evidence="2">
    <location>
        <begin position="295"/>
        <end position="306"/>
    </location>
</feature>
<feature type="compositionally biased region" description="Basic and acidic residues" evidence="2">
    <location>
        <begin position="314"/>
        <end position="328"/>
    </location>
</feature>
<feature type="compositionally biased region" description="Acidic residues" evidence="2">
    <location>
        <begin position="329"/>
        <end position="340"/>
    </location>
</feature>
<feature type="compositionally biased region" description="Basic residues" evidence="2">
    <location>
        <begin position="377"/>
        <end position="387"/>
    </location>
</feature>
<feature type="compositionally biased region" description="Acidic residues" evidence="2">
    <location>
        <begin position="392"/>
        <end position="404"/>
    </location>
</feature>
<feature type="compositionally biased region" description="Acidic residues" evidence="2">
    <location>
        <begin position="441"/>
        <end position="451"/>
    </location>
</feature>
<feature type="compositionally biased region" description="Basic residues" evidence="2">
    <location>
        <begin position="456"/>
        <end position="467"/>
    </location>
</feature>
<feature type="compositionally biased region" description="Acidic residues" evidence="2">
    <location>
        <begin position="471"/>
        <end position="480"/>
    </location>
</feature>
<feature type="compositionally biased region" description="Basic residues" evidence="2">
    <location>
        <begin position="485"/>
        <end position="496"/>
    </location>
</feature>
<feature type="compositionally biased region" description="Acidic residues" evidence="2">
    <location>
        <begin position="501"/>
        <end position="518"/>
    </location>
</feature>
<feature type="compositionally biased region" description="Basic residues" evidence="2">
    <location>
        <begin position="530"/>
        <end position="548"/>
    </location>
</feature>
<feature type="binding site" evidence="1">
    <location>
        <begin position="636"/>
        <end position="643"/>
    </location>
    <ligand>
        <name>ATP</name>
        <dbReference type="ChEBI" id="CHEBI:30616"/>
    </ligand>
</feature>
<feature type="binding site" evidence="1">
    <location>
        <begin position="956"/>
        <end position="963"/>
    </location>
    <ligand>
        <name>ATP</name>
        <dbReference type="ChEBI" id="CHEBI:30616"/>
    </ligand>
</feature>
<protein>
    <recommendedName>
        <fullName>ABC transporter F family member 4</fullName>
    </recommendedName>
</protein>
<name>ABCF4_DICDI</name>
<accession>Q8T6B4</accession>
<accession>Q55FQ7</accession>
<keyword id="KW-0067">ATP-binding</keyword>
<keyword id="KW-0547">Nucleotide-binding</keyword>
<keyword id="KW-1185">Reference proteome</keyword>
<keyword id="KW-0677">Repeat</keyword>
<keyword id="KW-0813">Transport</keyword>
<dbReference type="EMBL" id="AF479256">
    <property type="protein sequence ID" value="AAL87694.1"/>
    <property type="molecule type" value="Genomic_DNA"/>
</dbReference>
<dbReference type="EMBL" id="AAFI02000003">
    <property type="protein sequence ID" value="EAL73170.1"/>
    <property type="molecule type" value="Genomic_DNA"/>
</dbReference>
<dbReference type="RefSeq" id="XP_647476.1">
    <property type="nucleotide sequence ID" value="XM_642384.1"/>
</dbReference>
<dbReference type="SMR" id="Q8T6B4"/>
<dbReference type="FunCoup" id="Q8T6B4">
    <property type="interactions" value="102"/>
</dbReference>
<dbReference type="STRING" id="44689.Q8T6B4"/>
<dbReference type="PaxDb" id="44689-DDB0191119"/>
<dbReference type="EnsemblProtists" id="EAL73170">
    <property type="protein sequence ID" value="EAL73170"/>
    <property type="gene ID" value="DDB_G0267436"/>
</dbReference>
<dbReference type="GeneID" id="8616283"/>
<dbReference type="KEGG" id="ddi:DDB_G0267436"/>
<dbReference type="dictyBase" id="DDB_G0267436">
    <property type="gene designation" value="abcF4"/>
</dbReference>
<dbReference type="VEuPathDB" id="AmoebaDB:DDB_G0267436"/>
<dbReference type="eggNOG" id="KOG0062">
    <property type="taxonomic scope" value="Eukaryota"/>
</dbReference>
<dbReference type="HOGENOM" id="CLU_277633_0_0_1"/>
<dbReference type="InParanoid" id="Q8T6B4"/>
<dbReference type="OMA" id="HEATFLN"/>
<dbReference type="Reactome" id="R-DDI-382556">
    <property type="pathway name" value="ABC-family proteins mediated transport"/>
</dbReference>
<dbReference type="PRO" id="PR:Q8T6B4"/>
<dbReference type="Proteomes" id="UP000002195">
    <property type="component" value="Chromosome 1"/>
</dbReference>
<dbReference type="GO" id="GO:0005829">
    <property type="term" value="C:cytosol"/>
    <property type="evidence" value="ECO:0000250"/>
    <property type="project" value="dictyBase"/>
</dbReference>
<dbReference type="GO" id="GO:0005524">
    <property type="term" value="F:ATP binding"/>
    <property type="evidence" value="ECO:0000318"/>
    <property type="project" value="GO_Central"/>
</dbReference>
<dbReference type="GO" id="GO:0016887">
    <property type="term" value="F:ATP hydrolysis activity"/>
    <property type="evidence" value="ECO:0007669"/>
    <property type="project" value="InterPro"/>
</dbReference>
<dbReference type="GO" id="GO:0006448">
    <property type="term" value="P:regulation of translational elongation"/>
    <property type="evidence" value="ECO:0000250"/>
    <property type="project" value="dictyBase"/>
</dbReference>
<dbReference type="GO" id="GO:1903013">
    <property type="term" value="P:response to differentiation-inducing factor 1"/>
    <property type="evidence" value="ECO:0007005"/>
    <property type="project" value="dictyBase"/>
</dbReference>
<dbReference type="GO" id="GO:0031288">
    <property type="term" value="P:sorocarp morphogenesis"/>
    <property type="evidence" value="ECO:0000315"/>
    <property type="project" value="dictyBase"/>
</dbReference>
<dbReference type="CDD" id="cd03221">
    <property type="entry name" value="ABCF_EF-3"/>
    <property type="match status" value="2"/>
</dbReference>
<dbReference type="FunFam" id="3.40.50.300:FF:002699">
    <property type="entry name" value="ATP-binding cassette protein putative"/>
    <property type="match status" value="1"/>
</dbReference>
<dbReference type="FunFam" id="3.40.50.300:FF:000104">
    <property type="entry name" value="ATP-binding cassette sub-family F member 3"/>
    <property type="match status" value="1"/>
</dbReference>
<dbReference type="Gene3D" id="3.40.50.300">
    <property type="entry name" value="P-loop containing nucleotide triphosphate hydrolases"/>
    <property type="match status" value="3"/>
</dbReference>
<dbReference type="InterPro" id="IPR003593">
    <property type="entry name" value="AAA+_ATPase"/>
</dbReference>
<dbReference type="InterPro" id="IPR032781">
    <property type="entry name" value="ABC_tran_Xtn"/>
</dbReference>
<dbReference type="InterPro" id="IPR003439">
    <property type="entry name" value="ABC_transporter-like_ATP-bd"/>
</dbReference>
<dbReference type="InterPro" id="IPR017871">
    <property type="entry name" value="ABC_transporter-like_CS"/>
</dbReference>
<dbReference type="InterPro" id="IPR050611">
    <property type="entry name" value="ABCF_EF3_subfamily"/>
</dbReference>
<dbReference type="InterPro" id="IPR027417">
    <property type="entry name" value="P-loop_NTPase"/>
</dbReference>
<dbReference type="PANTHER" id="PTHR19211:SF14">
    <property type="entry name" value="ATP-BINDING CASSETTE SUB-FAMILY F MEMBER 1"/>
    <property type="match status" value="1"/>
</dbReference>
<dbReference type="PANTHER" id="PTHR19211">
    <property type="entry name" value="ATP-BINDING TRANSPORT PROTEIN-RELATED"/>
    <property type="match status" value="1"/>
</dbReference>
<dbReference type="Pfam" id="PF00005">
    <property type="entry name" value="ABC_tran"/>
    <property type="match status" value="2"/>
</dbReference>
<dbReference type="Pfam" id="PF12848">
    <property type="entry name" value="ABC_tran_Xtn"/>
    <property type="match status" value="1"/>
</dbReference>
<dbReference type="SMART" id="SM00382">
    <property type="entry name" value="AAA"/>
    <property type="match status" value="2"/>
</dbReference>
<dbReference type="SUPFAM" id="SSF52540">
    <property type="entry name" value="P-loop containing nucleoside triphosphate hydrolases"/>
    <property type="match status" value="2"/>
</dbReference>
<dbReference type="PROSITE" id="PS00211">
    <property type="entry name" value="ABC_TRANSPORTER_1"/>
    <property type="match status" value="2"/>
</dbReference>
<dbReference type="PROSITE" id="PS50893">
    <property type="entry name" value="ABC_TRANSPORTER_2"/>
    <property type="match status" value="2"/>
</dbReference>
<sequence>MGPKGKKKGQSFDDSDEEINNKKGGNKKGQQLEDDIPQPVKKGGNKKGQRGKQDSDDEPENIPQPVAKKSNNKKGQRGKQDSDDEQDEIPQPQKKGGKPAPQPQKKGGKQQDSDDEQDEIPQPVKKGGKPAPQKKGGKQQQQQDSDDEQEEIPQPVKKGGKPAPQKKGGKQQDSDDEEDEIPQPVKKGGKPAPQKKGGKQQESEDEDEEDEVQQPVKKGGKNDKKKGVKHVEEEEEEEEEEEIEQPVKKGGKAPKPKKGGKGSKQESEDEEDDVQQPVKKGGKKDKKKGSKHVEEEEEEEEEEEIEQPVKKGSNKKDQKKGGKGKHVEEEEEEEEEEEIEQPVKKGSNKKDQKKGGKGKQQQESEDEEEEIQQPVKKGGKKDKKKGSKHVEEEEEEEEEEEEIEQPVKKGGKKDKKSSLEDSMSELSIKSKKGGKGKHVEEEEEQEQEEEEEKPKSKSNKKDKKKGKHVEEEEEEEEEEEEKPKSKSNKKDKKKGSKHIEEEEEEEEEEEEEEKEEEEEKKMTLAEIRAAKKVKKVDKKEKKKEKEKKKRDEQEEDAFELAKKKQQEEIDYDNIDIDDVPGKDAPTYVHLKSSEGLRSKIGNDIKFDNLILSVPGRILLNNASLTLAYGQKYGFVGRNGIGKSTLVKKIAMRDEITIAPHLRVLYVEQEVTGDDTTPLDCVLAADEERKWLLDEEKVLTELEKVNPSWQFDPRQKRNYSLRDIYDRLKEIDADKASIRAANILIGLGFTFEEISVKKSRDYSGGWRMRIALARALFCKPEVLLLDEPSNHLDLHACVWLEKYLNQWDRTLLVVSHEASFLNEVVDNIIYIHDQKLDQYRGNYDAFMKQKSVNLRSKEKEKDKQDRKLKKMNEFITKNKNNTQAKQAASRAKKMEKIETIELEREDASLVVDFPQPEHLTPPLLVFKDVCFGYEGRPTMFKKLDIGIDMDSKIALVGMNGVGKSTLMKLMNGDLHETTGYIERSRKMRVARFSQHFVDQLDTTMTPIEYFQSKFNNPPVQQIRNHLGRFGICNSLPLHKITTLSGGQKSRVILAELAWAEPHILLLDEPTNHLDIDAIEALAEGINAFTGGVVLISHNQHLINLIAEQIWVVKKDGTIYLYPGTFMDYKNEISREIDNMVIRS</sequence>
<evidence type="ECO:0000255" key="1">
    <source>
        <dbReference type="PROSITE-ProRule" id="PRU00434"/>
    </source>
</evidence>
<evidence type="ECO:0000256" key="2">
    <source>
        <dbReference type="SAM" id="MobiDB-lite"/>
    </source>
</evidence>
<evidence type="ECO:0000305" key="3"/>